<protein>
    <recommendedName>
        <fullName evidence="1">UPF0735 ACT domain-containing protein SACOL1698</fullName>
    </recommendedName>
</protein>
<sequence length="152" mass="17474">MMDNKDYKKFYLIREDVLPESVVKTLKIKDALKSDPTLSIYDAVKQFDLSRSAFYKYRETIFPVDDKMLDHREFTLILYVTDIVGMLARVLDVISKLELSVLTIHQSIPMEEKATITLSLNAKSKETSVEDVIGALRNLDYVSKVELISMSM</sequence>
<evidence type="ECO:0000255" key="1">
    <source>
        <dbReference type="HAMAP-Rule" id="MF_00707"/>
    </source>
</evidence>
<dbReference type="EMBL" id="CP000046">
    <property type="protein sequence ID" value="AAW36804.1"/>
    <property type="molecule type" value="Genomic_DNA"/>
</dbReference>
<dbReference type="KEGG" id="sac:SACOL1698"/>
<dbReference type="HOGENOM" id="CLU_128147_0_0_9"/>
<dbReference type="Proteomes" id="UP000000530">
    <property type="component" value="Chromosome"/>
</dbReference>
<dbReference type="Gene3D" id="3.30.70.260">
    <property type="match status" value="1"/>
</dbReference>
<dbReference type="HAMAP" id="MF_00707">
    <property type="entry name" value="UPF0735"/>
    <property type="match status" value="1"/>
</dbReference>
<dbReference type="InterPro" id="IPR045865">
    <property type="entry name" value="ACT-like_dom_sf"/>
</dbReference>
<dbReference type="InterPro" id="IPR002912">
    <property type="entry name" value="ACT_dom"/>
</dbReference>
<dbReference type="InterPro" id="IPR008310">
    <property type="entry name" value="UPF0735_ACT_dom-cont"/>
</dbReference>
<dbReference type="NCBIfam" id="NF003361">
    <property type="entry name" value="PRK04435.1"/>
    <property type="match status" value="1"/>
</dbReference>
<dbReference type="PIRSF" id="PIRSF025624">
    <property type="entry name" value="ACT_PheB"/>
    <property type="match status" value="1"/>
</dbReference>
<dbReference type="SUPFAM" id="SSF55021">
    <property type="entry name" value="ACT-like"/>
    <property type="match status" value="1"/>
</dbReference>
<dbReference type="PROSITE" id="PS51671">
    <property type="entry name" value="ACT"/>
    <property type="match status" value="1"/>
</dbReference>
<accession>Q5HFC0</accession>
<comment type="similarity">
    <text evidence="1">Belongs to the UPF0735 family.</text>
</comment>
<feature type="chain" id="PRO_0000206474" description="UPF0735 ACT domain-containing protein SACOL1698">
    <location>
        <begin position="1"/>
        <end position="152"/>
    </location>
</feature>
<feature type="domain" description="ACT" evidence="1">
    <location>
        <begin position="75"/>
        <end position="150"/>
    </location>
</feature>
<proteinExistence type="inferred from homology"/>
<name>Y1698_STAAC</name>
<reference key="1">
    <citation type="journal article" date="2005" name="J. Bacteriol.">
        <title>Insights on evolution of virulence and resistance from the complete genome analysis of an early methicillin-resistant Staphylococcus aureus strain and a biofilm-producing methicillin-resistant Staphylococcus epidermidis strain.</title>
        <authorList>
            <person name="Gill S.R."/>
            <person name="Fouts D.E."/>
            <person name="Archer G.L."/>
            <person name="Mongodin E.F."/>
            <person name="DeBoy R.T."/>
            <person name="Ravel J."/>
            <person name="Paulsen I.T."/>
            <person name="Kolonay J.F."/>
            <person name="Brinkac L.M."/>
            <person name="Beanan M.J."/>
            <person name="Dodson R.J."/>
            <person name="Daugherty S.C."/>
            <person name="Madupu R."/>
            <person name="Angiuoli S.V."/>
            <person name="Durkin A.S."/>
            <person name="Haft D.H."/>
            <person name="Vamathevan J.J."/>
            <person name="Khouri H."/>
            <person name="Utterback T.R."/>
            <person name="Lee C."/>
            <person name="Dimitrov G."/>
            <person name="Jiang L."/>
            <person name="Qin H."/>
            <person name="Weidman J."/>
            <person name="Tran K."/>
            <person name="Kang K.H."/>
            <person name="Hance I.R."/>
            <person name="Nelson K.E."/>
            <person name="Fraser C.M."/>
        </authorList>
    </citation>
    <scope>NUCLEOTIDE SEQUENCE [LARGE SCALE GENOMIC DNA]</scope>
    <source>
        <strain>COL</strain>
    </source>
</reference>
<gene>
    <name type="ordered locus">SACOL1698</name>
</gene>
<organism>
    <name type="scientific">Staphylococcus aureus (strain COL)</name>
    <dbReference type="NCBI Taxonomy" id="93062"/>
    <lineage>
        <taxon>Bacteria</taxon>
        <taxon>Bacillati</taxon>
        <taxon>Bacillota</taxon>
        <taxon>Bacilli</taxon>
        <taxon>Bacillales</taxon>
        <taxon>Staphylococcaceae</taxon>
        <taxon>Staphylococcus</taxon>
    </lineage>
</organism>